<feature type="chain" id="PRO_0000204593" description="DNA polymerase III PolC-type">
    <location>
        <begin position="1"/>
        <end position="1442"/>
    </location>
</feature>
<feature type="domain" description="Exonuclease">
    <location>
        <begin position="426"/>
        <end position="582"/>
    </location>
</feature>
<sequence length="1442" mass="163421">MVIILAMTNREKFKVLADQIKISNQLEQDILEQGELTRIDVSNKNRTWTFQISLPHFLSHEDYLLFTHAIEEEFKEIATVAIDFSIKDTNNQDEFALKYFGHCIDQTRLSPKVKGQLKQKKLIMSGNVLKVLVSNDIERNHFDKACNGSLVKAFRQCGFEIDKVVFETDSTNHDDDLASLEAHIQQEDEQSAREATEKLEKMKAEKAKQQDNNESTVEKCQIGKPIQIENIKPIESIIEEEFKVAIEGVIFDINLKELKSGRHIVELKVTDYTDSLVLKMFTRKNKDDLDHFKALSVGKWVRAQGRIEEDTFVRDLVMMMSDIEEIKKTPKQDKAEDKRVEFHLHTSMSQMDGIPNISAYVEQAAKWGHQALAVTDHNVVQAFPDAHNAAEKHGIKMIYGMEGMLVDDGVPIAYKPTDRNLKDATYVVFDVETTGLSNQYDKIIELAAVKVHNGEIIDKFERFSNPHERLSETIINLTHITDDMLTDAPEIEEVLTEFKEWVGDAIFVAHNASFDMGFIDTGYERLGFGPSTNGVIDTLELSRTINTEYGKHGLNFLAKKYGVELTQHHRAIYDTEATAYIFIKMVQQMKELGVNNHLEINKKLTNEDAYKRARPSHVTLIVQNQEGLKNLFKIVSASLVKYYYRTPRIPRSLLNEYREGILIGTACDEGELFTAVMQKDQSEVEKIAKFYDFIEVQPPALYQDLMDRELIRDNETLTQIYKRLIDAGKSANIPVIATGNAHYLYEHDAIARKILIASQPGNPLNRSTLPEAHFRTTDEMLDDFHFLGEEKAYEIVVTNTNELANKIEKVVPIKDKLFTPRMDGANEEIRELSYSNAKKLYGEDLPQIVIDRLEKELDSIIGNGFSVIYLISQRLVKKSLDDGYLVGSRGSVGSSFVATMTEITEVNPLPPHYICSHCKTSEFFDDGSVGSGFDLPDKKCPTCGNELIKEGQDIPFETFLGFKGDKVPDIDLNFSGEYQPNAHNYTKVLFGEDKVFRAGTIGTVAEKTAFGFVKGYLNDQGIHKRGAEIDRLVKGCTGVKRTTGQHPGGIIVVPDYMDIYDFTPIQFPADDQSAAWMTTHFDFHSIHDNVLKLDILGHDDPTMIRMLQDLSGIDPKTIPVDDKETMQIFSGPESLGVTEDEILCKTGTFGVPEFGTGFVRQMLEDTKPTTFSELVQISGLSHGTDVWLGNAQELIRQGICDLSSVIGCRDDIMVYLMYAGLEPSMAFKTMEFVRKGRGLTDEMVEAMKENNVPDWYLDSCRKIKYMFPKAHAAAYVLMAVRIAYFKVHHPLYYYAAYFTIRASDFDLITMIKDKTSIRNTVKDMYSRYMDLGKKEKDVLTVLEIMNEMAHRGFRLQPISLEKSQAFDFIIEGDTLIPPFISVPGLGENVAQRIVEAREEGPFLSKEDLNKKAGLSQKVIDYLDELGSLPDLPDKAQLSIFDM</sequence>
<comment type="function">
    <text evidence="1">Required for replicative DNA synthesis. This DNA polymerase also exhibits 3' to 5' exonuclease activity.</text>
</comment>
<comment type="catalytic activity">
    <reaction evidence="1">
        <text>DNA(n) + a 2'-deoxyribonucleoside 5'-triphosphate = DNA(n+1) + diphosphate</text>
        <dbReference type="Rhea" id="RHEA:22508"/>
        <dbReference type="Rhea" id="RHEA-COMP:17339"/>
        <dbReference type="Rhea" id="RHEA-COMP:17340"/>
        <dbReference type="ChEBI" id="CHEBI:33019"/>
        <dbReference type="ChEBI" id="CHEBI:61560"/>
        <dbReference type="ChEBI" id="CHEBI:173112"/>
        <dbReference type="EC" id="2.7.7.7"/>
    </reaction>
</comment>
<comment type="subcellular location">
    <subcellularLocation>
        <location evidence="1">Cytoplasm</location>
    </subcellularLocation>
</comment>
<comment type="similarity">
    <text evidence="1">Belongs to the DNA polymerase type-C family. PolC subfamily.</text>
</comment>
<protein>
    <recommendedName>
        <fullName evidence="1">DNA polymerase III PolC-type</fullName>
        <shortName evidence="1">PolIII</shortName>
        <ecNumber evidence="1">2.7.7.7</ecNumber>
    </recommendedName>
</protein>
<evidence type="ECO:0000255" key="1">
    <source>
        <dbReference type="HAMAP-Rule" id="MF_00356"/>
    </source>
</evidence>
<dbReference type="EC" id="2.7.7.7" evidence="1"/>
<dbReference type="EMBL" id="AE015929">
    <property type="protein sequence ID" value="AAO04537.1"/>
    <property type="molecule type" value="Genomic_DNA"/>
</dbReference>
<dbReference type="RefSeq" id="NP_764495.1">
    <property type="nucleotide sequence ID" value="NC_004461.1"/>
</dbReference>
<dbReference type="SMR" id="Q8CPG6"/>
<dbReference type="KEGG" id="sep:SE_0940"/>
<dbReference type="PATRIC" id="fig|176280.10.peg.915"/>
<dbReference type="eggNOG" id="COG2176">
    <property type="taxonomic scope" value="Bacteria"/>
</dbReference>
<dbReference type="HOGENOM" id="CLU_003297_0_0_9"/>
<dbReference type="OrthoDB" id="9804290at2"/>
<dbReference type="Proteomes" id="UP000001411">
    <property type="component" value="Chromosome"/>
</dbReference>
<dbReference type="GO" id="GO:0005737">
    <property type="term" value="C:cytoplasm"/>
    <property type="evidence" value="ECO:0007669"/>
    <property type="project" value="UniProtKB-SubCell"/>
</dbReference>
<dbReference type="GO" id="GO:0008408">
    <property type="term" value="F:3'-5' exonuclease activity"/>
    <property type="evidence" value="ECO:0007669"/>
    <property type="project" value="UniProtKB-UniRule"/>
</dbReference>
<dbReference type="GO" id="GO:0003677">
    <property type="term" value="F:DNA binding"/>
    <property type="evidence" value="ECO:0007669"/>
    <property type="project" value="UniProtKB-UniRule"/>
</dbReference>
<dbReference type="GO" id="GO:0003887">
    <property type="term" value="F:DNA-directed DNA polymerase activity"/>
    <property type="evidence" value="ECO:0007669"/>
    <property type="project" value="UniProtKB-UniRule"/>
</dbReference>
<dbReference type="GO" id="GO:0006261">
    <property type="term" value="P:DNA-templated DNA replication"/>
    <property type="evidence" value="ECO:0007669"/>
    <property type="project" value="UniProtKB-UniRule"/>
</dbReference>
<dbReference type="CDD" id="cd06127">
    <property type="entry name" value="DEDDh"/>
    <property type="match status" value="1"/>
</dbReference>
<dbReference type="CDD" id="cd07435">
    <property type="entry name" value="PHP_PolIIIA_POLC"/>
    <property type="match status" value="1"/>
</dbReference>
<dbReference type="CDD" id="cd04484">
    <property type="entry name" value="polC_OBF"/>
    <property type="match status" value="1"/>
</dbReference>
<dbReference type="FunFam" id="3.30.420.10:FF:000045">
    <property type="entry name" value="3'-5' exonuclease DinG"/>
    <property type="match status" value="1"/>
</dbReference>
<dbReference type="Gene3D" id="1.10.150.870">
    <property type="match status" value="1"/>
</dbReference>
<dbReference type="Gene3D" id="3.30.1900.20">
    <property type="match status" value="2"/>
</dbReference>
<dbReference type="Gene3D" id="6.10.140.1510">
    <property type="match status" value="1"/>
</dbReference>
<dbReference type="Gene3D" id="3.20.20.140">
    <property type="entry name" value="Metal-dependent hydrolases"/>
    <property type="match status" value="1"/>
</dbReference>
<dbReference type="Gene3D" id="2.40.50.140">
    <property type="entry name" value="Nucleic acid-binding proteins"/>
    <property type="match status" value="1"/>
</dbReference>
<dbReference type="Gene3D" id="1.10.150.700">
    <property type="entry name" value="PolC, middle finger domain"/>
    <property type="match status" value="1"/>
</dbReference>
<dbReference type="Gene3D" id="3.30.420.10">
    <property type="entry name" value="Ribonuclease H-like superfamily/Ribonuclease H"/>
    <property type="match status" value="1"/>
</dbReference>
<dbReference type="HAMAP" id="MF_00356">
    <property type="entry name" value="DNApol_PolC"/>
    <property type="match status" value="1"/>
</dbReference>
<dbReference type="InterPro" id="IPR011708">
    <property type="entry name" value="DNA_pol3_alpha_NTPase_dom"/>
</dbReference>
<dbReference type="InterPro" id="IPR040982">
    <property type="entry name" value="DNA_pol3_finger"/>
</dbReference>
<dbReference type="InterPro" id="IPR024754">
    <property type="entry name" value="DNA_PolC-like_N_II"/>
</dbReference>
<dbReference type="InterPro" id="IPR028112">
    <property type="entry name" value="DNA_PolC-type_N_I"/>
</dbReference>
<dbReference type="InterPro" id="IPR004805">
    <property type="entry name" value="DnaE2/DnaE/PolC"/>
</dbReference>
<dbReference type="InterPro" id="IPR029460">
    <property type="entry name" value="DNAPol_HHH"/>
</dbReference>
<dbReference type="InterPro" id="IPR006054">
    <property type="entry name" value="DnaQ"/>
</dbReference>
<dbReference type="InterPro" id="IPR013520">
    <property type="entry name" value="Exonuclease_RNaseT/DNA_pol3"/>
</dbReference>
<dbReference type="InterPro" id="IPR012340">
    <property type="entry name" value="NA-bd_OB-fold"/>
</dbReference>
<dbReference type="InterPro" id="IPR004013">
    <property type="entry name" value="PHP_dom"/>
</dbReference>
<dbReference type="InterPro" id="IPR003141">
    <property type="entry name" value="Pol/His_phosphatase_N"/>
</dbReference>
<dbReference type="InterPro" id="IPR006308">
    <property type="entry name" value="Pol_III_a_PolC-type_gram_pos"/>
</dbReference>
<dbReference type="InterPro" id="IPR044923">
    <property type="entry name" value="PolC_middle_finger_sf"/>
</dbReference>
<dbReference type="InterPro" id="IPR012337">
    <property type="entry name" value="RNaseH-like_sf"/>
</dbReference>
<dbReference type="InterPro" id="IPR036397">
    <property type="entry name" value="RNaseH_sf"/>
</dbReference>
<dbReference type="NCBIfam" id="TIGR00573">
    <property type="entry name" value="dnaq"/>
    <property type="match status" value="1"/>
</dbReference>
<dbReference type="NCBIfam" id="TIGR01405">
    <property type="entry name" value="polC_Gram_pos"/>
    <property type="match status" value="1"/>
</dbReference>
<dbReference type="NCBIfam" id="NF001688">
    <property type="entry name" value="PRK00448.1"/>
    <property type="match status" value="1"/>
</dbReference>
<dbReference type="PANTHER" id="PTHR32294:SF5">
    <property type="entry name" value="DNA POLYMERASE III POLC-TYPE"/>
    <property type="match status" value="1"/>
</dbReference>
<dbReference type="PANTHER" id="PTHR32294">
    <property type="entry name" value="DNA POLYMERASE III SUBUNIT ALPHA"/>
    <property type="match status" value="1"/>
</dbReference>
<dbReference type="Pfam" id="PF14480">
    <property type="entry name" value="DNA_pol3_a_NI"/>
    <property type="match status" value="1"/>
</dbReference>
<dbReference type="Pfam" id="PF11490">
    <property type="entry name" value="DNA_pol3_a_NII"/>
    <property type="match status" value="1"/>
</dbReference>
<dbReference type="Pfam" id="PF07733">
    <property type="entry name" value="DNA_pol3_alpha"/>
    <property type="match status" value="2"/>
</dbReference>
<dbReference type="Pfam" id="PF17657">
    <property type="entry name" value="DNA_pol3_finger"/>
    <property type="match status" value="1"/>
</dbReference>
<dbReference type="Pfam" id="PF14579">
    <property type="entry name" value="HHH_6"/>
    <property type="match status" value="1"/>
</dbReference>
<dbReference type="Pfam" id="PF02811">
    <property type="entry name" value="PHP"/>
    <property type="match status" value="2"/>
</dbReference>
<dbReference type="Pfam" id="PF00929">
    <property type="entry name" value="RNase_T"/>
    <property type="match status" value="1"/>
</dbReference>
<dbReference type="SMART" id="SM00479">
    <property type="entry name" value="EXOIII"/>
    <property type="match status" value="1"/>
</dbReference>
<dbReference type="SMART" id="SM00481">
    <property type="entry name" value="POLIIIAc"/>
    <property type="match status" value="1"/>
</dbReference>
<dbReference type="SUPFAM" id="SSF81585">
    <property type="entry name" value="PsbU/PolX domain-like"/>
    <property type="match status" value="1"/>
</dbReference>
<dbReference type="SUPFAM" id="SSF53098">
    <property type="entry name" value="Ribonuclease H-like"/>
    <property type="match status" value="1"/>
</dbReference>
<proteinExistence type="inferred from homology"/>
<reference key="1">
    <citation type="journal article" date="2003" name="Mol. Microbiol.">
        <title>Genome-based analysis of virulence genes in a non-biofilm-forming Staphylococcus epidermidis strain (ATCC 12228).</title>
        <authorList>
            <person name="Zhang Y.-Q."/>
            <person name="Ren S.-X."/>
            <person name="Li H.-L."/>
            <person name="Wang Y.-X."/>
            <person name="Fu G."/>
            <person name="Yang J."/>
            <person name="Qin Z.-Q."/>
            <person name="Miao Y.-G."/>
            <person name="Wang W.-Y."/>
            <person name="Chen R.-S."/>
            <person name="Shen Y."/>
            <person name="Chen Z."/>
            <person name="Yuan Z.-H."/>
            <person name="Zhao G.-P."/>
            <person name="Qu D."/>
            <person name="Danchin A."/>
            <person name="Wen Y.-M."/>
        </authorList>
    </citation>
    <scope>NUCLEOTIDE SEQUENCE [LARGE SCALE GENOMIC DNA]</scope>
    <source>
        <strain>ATCC 12228 / FDA PCI 1200</strain>
    </source>
</reference>
<gene>
    <name evidence="1" type="primary">polC</name>
    <name type="ordered locus">SE_0940</name>
</gene>
<name>DPO3_STAES</name>
<organism>
    <name type="scientific">Staphylococcus epidermidis (strain ATCC 12228 / FDA PCI 1200)</name>
    <dbReference type="NCBI Taxonomy" id="176280"/>
    <lineage>
        <taxon>Bacteria</taxon>
        <taxon>Bacillati</taxon>
        <taxon>Bacillota</taxon>
        <taxon>Bacilli</taxon>
        <taxon>Bacillales</taxon>
        <taxon>Staphylococcaceae</taxon>
        <taxon>Staphylococcus</taxon>
    </lineage>
</organism>
<keyword id="KW-0963">Cytoplasm</keyword>
<keyword id="KW-0235">DNA replication</keyword>
<keyword id="KW-0239">DNA-directed DNA polymerase</keyword>
<keyword id="KW-0269">Exonuclease</keyword>
<keyword id="KW-0378">Hydrolase</keyword>
<keyword id="KW-0540">Nuclease</keyword>
<keyword id="KW-0548">Nucleotidyltransferase</keyword>
<keyword id="KW-0808">Transferase</keyword>
<accession>Q8CPG6</accession>